<proteinExistence type="evidence at transcript level"/>
<comment type="function">
    <text>DNA-dependent RNA polymerase catalyzes the transcription of DNA into RNA using the four ribonucleoside triphosphates as substrates. Component of RNA polymerase V involved in RNA-directed DNA methylation-dependent (RdDM) silencing of endogenous repeated sequences, including transposable elements.</text>
</comment>
<comment type="subunit">
    <text>Component of the RNA polymerase V complex.</text>
</comment>
<comment type="subcellular location">
    <subcellularLocation>
        <location evidence="1">Nucleus</location>
    </subcellularLocation>
</comment>
<comment type="tissue specificity">
    <text evidence="2">Expressed in flower buds and siliques.</text>
</comment>
<comment type="similarity">
    <text evidence="3">Belongs to the archaeal Rpo5/eukaryotic RPB5 RNA polymerase subunit family.</text>
</comment>
<evidence type="ECO:0000250" key="1"/>
<evidence type="ECO:0000269" key="2">
    <source>
    </source>
</evidence>
<evidence type="ECO:0000305" key="3"/>
<gene>
    <name type="primary">NRPE5C</name>
    <name type="synonym">NRPB5L2</name>
    <name type="synonym">RPB5E</name>
    <name type="ordered locus">At3g54490</name>
    <name type="ORF">T14E10.60</name>
</gene>
<accession>Q9M1H8</accession>
<protein>
    <recommendedName>
        <fullName>DNA-directed RNA polymerase V subunit 5C</fullName>
    </recommendedName>
</protein>
<name>RPE5C_ARATH</name>
<reference key="1">
    <citation type="journal article" date="2000" name="Nature">
        <title>Sequence and analysis of chromosome 3 of the plant Arabidopsis thaliana.</title>
        <authorList>
            <person name="Salanoubat M."/>
            <person name="Lemcke K."/>
            <person name="Rieger M."/>
            <person name="Ansorge W."/>
            <person name="Unseld M."/>
            <person name="Fartmann B."/>
            <person name="Valle G."/>
            <person name="Bloecker H."/>
            <person name="Perez-Alonso M."/>
            <person name="Obermaier B."/>
            <person name="Delseny M."/>
            <person name="Boutry M."/>
            <person name="Grivell L.A."/>
            <person name="Mache R."/>
            <person name="Puigdomenech P."/>
            <person name="De Simone V."/>
            <person name="Choisne N."/>
            <person name="Artiguenave F."/>
            <person name="Robert C."/>
            <person name="Brottier P."/>
            <person name="Wincker P."/>
            <person name="Cattolico L."/>
            <person name="Weissenbach J."/>
            <person name="Saurin W."/>
            <person name="Quetier F."/>
            <person name="Schaefer M."/>
            <person name="Mueller-Auer S."/>
            <person name="Gabel C."/>
            <person name="Fuchs M."/>
            <person name="Benes V."/>
            <person name="Wurmbach E."/>
            <person name="Drzonek H."/>
            <person name="Erfle H."/>
            <person name="Jordan N."/>
            <person name="Bangert S."/>
            <person name="Wiedelmann R."/>
            <person name="Kranz H."/>
            <person name="Voss H."/>
            <person name="Holland R."/>
            <person name="Brandt P."/>
            <person name="Nyakatura G."/>
            <person name="Vezzi A."/>
            <person name="D'Angelo M."/>
            <person name="Pallavicini A."/>
            <person name="Toppo S."/>
            <person name="Simionati B."/>
            <person name="Conrad A."/>
            <person name="Hornischer K."/>
            <person name="Kauer G."/>
            <person name="Loehnert T.-H."/>
            <person name="Nordsiek G."/>
            <person name="Reichelt J."/>
            <person name="Scharfe M."/>
            <person name="Schoen O."/>
            <person name="Bargues M."/>
            <person name="Terol J."/>
            <person name="Climent J."/>
            <person name="Navarro P."/>
            <person name="Collado C."/>
            <person name="Perez-Perez A."/>
            <person name="Ottenwaelder B."/>
            <person name="Duchemin D."/>
            <person name="Cooke R."/>
            <person name="Laudie M."/>
            <person name="Berger-Llauro C."/>
            <person name="Purnelle B."/>
            <person name="Masuy D."/>
            <person name="de Haan M."/>
            <person name="Maarse A.C."/>
            <person name="Alcaraz J.-P."/>
            <person name="Cottet A."/>
            <person name="Casacuberta E."/>
            <person name="Monfort A."/>
            <person name="Argiriou A."/>
            <person name="Flores M."/>
            <person name="Liguori R."/>
            <person name="Vitale D."/>
            <person name="Mannhaupt G."/>
            <person name="Haase D."/>
            <person name="Schoof H."/>
            <person name="Rudd S."/>
            <person name="Zaccaria P."/>
            <person name="Mewes H.-W."/>
            <person name="Mayer K.F.X."/>
            <person name="Kaul S."/>
            <person name="Town C.D."/>
            <person name="Koo H.L."/>
            <person name="Tallon L.J."/>
            <person name="Jenkins J."/>
            <person name="Rooney T."/>
            <person name="Rizzo M."/>
            <person name="Walts A."/>
            <person name="Utterback T."/>
            <person name="Fujii C.Y."/>
            <person name="Shea T.P."/>
            <person name="Creasy T.H."/>
            <person name="Haas B."/>
            <person name="Maiti R."/>
            <person name="Wu D."/>
            <person name="Peterson J."/>
            <person name="Van Aken S."/>
            <person name="Pai G."/>
            <person name="Militscher J."/>
            <person name="Sellers P."/>
            <person name="Gill J.E."/>
            <person name="Feldblyum T.V."/>
            <person name="Preuss D."/>
            <person name="Lin X."/>
            <person name="Nierman W.C."/>
            <person name="Salzberg S.L."/>
            <person name="White O."/>
            <person name="Venter J.C."/>
            <person name="Fraser C.M."/>
            <person name="Kaneko T."/>
            <person name="Nakamura Y."/>
            <person name="Sato S."/>
            <person name="Kato T."/>
            <person name="Asamizu E."/>
            <person name="Sasamoto S."/>
            <person name="Kimura T."/>
            <person name="Idesawa K."/>
            <person name="Kawashima K."/>
            <person name="Kishida Y."/>
            <person name="Kiyokawa C."/>
            <person name="Kohara M."/>
            <person name="Matsumoto M."/>
            <person name="Matsuno A."/>
            <person name="Muraki A."/>
            <person name="Nakayama S."/>
            <person name="Nakazaki N."/>
            <person name="Shinpo S."/>
            <person name="Takeuchi C."/>
            <person name="Wada T."/>
            <person name="Watanabe A."/>
            <person name="Yamada M."/>
            <person name="Yasuda M."/>
            <person name="Tabata S."/>
        </authorList>
    </citation>
    <scope>NUCLEOTIDE SEQUENCE [LARGE SCALE GENOMIC DNA]</scope>
    <source>
        <strain>cv. Columbia</strain>
    </source>
</reference>
<reference key="2">
    <citation type="journal article" date="2017" name="Plant J.">
        <title>Araport11: a complete reannotation of the Arabidopsis thaliana reference genome.</title>
        <authorList>
            <person name="Cheng C.Y."/>
            <person name="Krishnakumar V."/>
            <person name="Chan A.P."/>
            <person name="Thibaud-Nissen F."/>
            <person name="Schobel S."/>
            <person name="Town C.D."/>
        </authorList>
    </citation>
    <scope>GENOME REANNOTATION</scope>
    <source>
        <strain>cv. Columbia</strain>
    </source>
</reference>
<reference key="3">
    <citation type="journal article" date="2009" name="Mol. Cell">
        <title>Subunit compositions of the RNA-silencing enzymes Pol IV and Pol V reveal their origins as specialized forms of RNA polymerase II.</title>
        <authorList>
            <person name="Ream T.S."/>
            <person name="Haag J.R."/>
            <person name="Wierzbicki A.T."/>
            <person name="Nicora C.D."/>
            <person name="Norbeck A.D."/>
            <person name="Zhu J.K."/>
            <person name="Hagen G."/>
            <person name="Guilfoyle T.J."/>
            <person name="Pasa-Tolic L."/>
            <person name="Pikaard C.S."/>
        </authorList>
    </citation>
    <scope>NOMENCLATURE</scope>
</reference>
<reference key="4">
    <citation type="journal article" date="2009" name="Proc. Natl. Acad. Sci. U.S.A.">
        <title>PolV(PolIVb) function in RNA-directed DNA methylation requires the conserved active site and an additional plant-specific subunit.</title>
        <authorList>
            <person name="Lahmy S."/>
            <person name="Pontier D."/>
            <person name="Cavel E."/>
            <person name="Vega D."/>
            <person name="El-Shami M."/>
            <person name="Kanno T."/>
            <person name="Lagrange T."/>
        </authorList>
    </citation>
    <scope>IDENTIFICATION</scope>
    <scope>TISSUE SPECIFICITY</scope>
    <scope>NOMENCLATURE</scope>
</reference>
<sequence>MEETMAEEGCCENVESTFDDGTNCISKTEDTGGIESKRFYLARTTAFEMLRDRGYEVNEAELSLTLSEFRSVFGEKPELERLRICVPLRSDPKKKILVVFMGTEPITVKSVRALHIQISNNVGLHAMILVLQSKMNHFAQKALTTFPFTVETFPIEDLLVNITKHIQQPKIEILNKEEKEQLLRKHALEDKQLPYLQEKDSFVRYYGLKKKQVVKITYSKEPVGDFVTYRCII</sequence>
<feature type="chain" id="PRO_0000423329" description="DNA-directed RNA polymerase V subunit 5C">
    <location>
        <begin position="1"/>
        <end position="233"/>
    </location>
</feature>
<keyword id="KW-0539">Nucleus</keyword>
<keyword id="KW-1185">Reference proteome</keyword>
<dbReference type="EMBL" id="AL138656">
    <property type="protein sequence ID" value="CAB77569.1"/>
    <property type="molecule type" value="Genomic_DNA"/>
</dbReference>
<dbReference type="EMBL" id="CP002686">
    <property type="protein sequence ID" value="AEE79238.1"/>
    <property type="molecule type" value="Genomic_DNA"/>
</dbReference>
<dbReference type="PIR" id="T47608">
    <property type="entry name" value="T47608"/>
</dbReference>
<dbReference type="RefSeq" id="NP_191013.1">
    <property type="nucleotide sequence ID" value="NM_115306.5"/>
</dbReference>
<dbReference type="SMR" id="Q9M1H8"/>
<dbReference type="BioGRID" id="9930">
    <property type="interactions" value="1"/>
</dbReference>
<dbReference type="STRING" id="3702.Q9M1H8"/>
<dbReference type="PaxDb" id="3702-AT3G54490.1"/>
<dbReference type="ProteomicsDB" id="228219"/>
<dbReference type="EnsemblPlants" id="AT3G54490.1">
    <property type="protein sequence ID" value="AT3G54490.1"/>
    <property type="gene ID" value="AT3G54490"/>
</dbReference>
<dbReference type="GeneID" id="824614"/>
<dbReference type="Gramene" id="AT3G54490.1">
    <property type="protein sequence ID" value="AT3G54490.1"/>
    <property type="gene ID" value="AT3G54490"/>
</dbReference>
<dbReference type="KEGG" id="ath:AT3G54490"/>
<dbReference type="Araport" id="AT3G54490"/>
<dbReference type="TAIR" id="AT3G54490">
    <property type="gene designation" value="RPB5E"/>
</dbReference>
<dbReference type="eggNOG" id="KOG3218">
    <property type="taxonomic scope" value="Eukaryota"/>
</dbReference>
<dbReference type="HOGENOM" id="CLU_058320_0_0_1"/>
<dbReference type="InParanoid" id="Q9M1H8"/>
<dbReference type="OMA" id="VTYRCII"/>
<dbReference type="OrthoDB" id="248779at2759"/>
<dbReference type="PhylomeDB" id="Q9M1H8"/>
<dbReference type="PRO" id="PR:Q9M1H8"/>
<dbReference type="Proteomes" id="UP000006548">
    <property type="component" value="Chromosome 3"/>
</dbReference>
<dbReference type="ExpressionAtlas" id="Q9M1H8">
    <property type="expression patterns" value="baseline and differential"/>
</dbReference>
<dbReference type="GO" id="GO:0000419">
    <property type="term" value="C:RNA polymerase V complex"/>
    <property type="evidence" value="ECO:0000314"/>
    <property type="project" value="UniProtKB"/>
</dbReference>
<dbReference type="GO" id="GO:0003677">
    <property type="term" value="F:DNA binding"/>
    <property type="evidence" value="ECO:0007669"/>
    <property type="project" value="InterPro"/>
</dbReference>
<dbReference type="GO" id="GO:0003899">
    <property type="term" value="F:DNA-directed RNA polymerase activity"/>
    <property type="evidence" value="ECO:0007669"/>
    <property type="project" value="InterPro"/>
</dbReference>
<dbReference type="GO" id="GO:0006351">
    <property type="term" value="P:DNA-templated transcription"/>
    <property type="evidence" value="ECO:0007669"/>
    <property type="project" value="InterPro"/>
</dbReference>
<dbReference type="FunFam" id="3.90.940.20:FF:000001">
    <property type="entry name" value="DNA-directed RNA polymerases I, II, and III subunit RPABC1"/>
    <property type="match status" value="1"/>
</dbReference>
<dbReference type="Gene3D" id="3.40.1340.10">
    <property type="entry name" value="RNA polymerase, Rpb5, N-terminal domain"/>
    <property type="match status" value="1"/>
</dbReference>
<dbReference type="Gene3D" id="3.90.940.20">
    <property type="entry name" value="RPB5-like RNA polymerase subunit"/>
    <property type="match status" value="1"/>
</dbReference>
<dbReference type="InterPro" id="IPR014381">
    <property type="entry name" value="Arch_Rpo5/euc_Rpb5"/>
</dbReference>
<dbReference type="InterPro" id="IPR005571">
    <property type="entry name" value="RNA_pol_Rpb5_N"/>
</dbReference>
<dbReference type="InterPro" id="IPR036710">
    <property type="entry name" value="RNA_pol_Rpb5_N_sf"/>
</dbReference>
<dbReference type="InterPro" id="IPR000783">
    <property type="entry name" value="RNA_pol_subH/Rpb5_C"/>
</dbReference>
<dbReference type="InterPro" id="IPR035913">
    <property type="entry name" value="RPB5-like_sf"/>
</dbReference>
<dbReference type="PANTHER" id="PTHR10535:SF12">
    <property type="entry name" value="DNA-DIRECTED RNA POLYMERASE V SUBUNIT 5C"/>
    <property type="match status" value="1"/>
</dbReference>
<dbReference type="PANTHER" id="PTHR10535">
    <property type="entry name" value="DNA-DIRECTED RNA POLYMERASES I, II, AND III SUBUNIT RPABC1"/>
    <property type="match status" value="1"/>
</dbReference>
<dbReference type="Pfam" id="PF01191">
    <property type="entry name" value="RNA_pol_Rpb5_C"/>
    <property type="match status" value="1"/>
</dbReference>
<dbReference type="Pfam" id="PF03871">
    <property type="entry name" value="RNA_pol_Rpb5_N"/>
    <property type="match status" value="1"/>
</dbReference>
<dbReference type="PIRSF" id="PIRSF000747">
    <property type="entry name" value="RPB5"/>
    <property type="match status" value="1"/>
</dbReference>
<dbReference type="SUPFAM" id="SSF53036">
    <property type="entry name" value="Eukaryotic RPB5 N-terminal domain"/>
    <property type="match status" value="1"/>
</dbReference>
<dbReference type="SUPFAM" id="SSF55287">
    <property type="entry name" value="RPB5-like RNA polymerase subunit"/>
    <property type="match status" value="1"/>
</dbReference>
<organism>
    <name type="scientific">Arabidopsis thaliana</name>
    <name type="common">Mouse-ear cress</name>
    <dbReference type="NCBI Taxonomy" id="3702"/>
    <lineage>
        <taxon>Eukaryota</taxon>
        <taxon>Viridiplantae</taxon>
        <taxon>Streptophyta</taxon>
        <taxon>Embryophyta</taxon>
        <taxon>Tracheophyta</taxon>
        <taxon>Spermatophyta</taxon>
        <taxon>Magnoliopsida</taxon>
        <taxon>eudicotyledons</taxon>
        <taxon>Gunneridae</taxon>
        <taxon>Pentapetalae</taxon>
        <taxon>rosids</taxon>
        <taxon>malvids</taxon>
        <taxon>Brassicales</taxon>
        <taxon>Brassicaceae</taxon>
        <taxon>Camelineae</taxon>
        <taxon>Arabidopsis</taxon>
    </lineage>
</organism>